<keyword id="KW-1185">Reference proteome</keyword>
<keyword id="KW-0687">Ribonucleoprotein</keyword>
<keyword id="KW-0689">Ribosomal protein</keyword>
<keyword id="KW-0694">RNA-binding</keyword>
<keyword id="KW-0699">rRNA-binding</keyword>
<organism>
    <name type="scientific">Salmonella typhimurium (strain LT2 / SGSC1412 / ATCC 700720)</name>
    <dbReference type="NCBI Taxonomy" id="99287"/>
    <lineage>
        <taxon>Bacteria</taxon>
        <taxon>Pseudomonadati</taxon>
        <taxon>Pseudomonadota</taxon>
        <taxon>Gammaproteobacteria</taxon>
        <taxon>Enterobacterales</taxon>
        <taxon>Enterobacteriaceae</taxon>
        <taxon>Salmonella</taxon>
    </lineage>
</organism>
<gene>
    <name evidence="1" type="primary">rpsK</name>
    <name type="ordered locus">STM3417</name>
</gene>
<protein>
    <recommendedName>
        <fullName evidence="1">Small ribosomal subunit protein uS11</fullName>
    </recommendedName>
    <alternativeName>
        <fullName evidence="2">30S ribosomal protein S11</fullName>
    </alternativeName>
</protein>
<proteinExistence type="inferred from homology"/>
<comment type="function">
    <text evidence="1">Located on the platform of the 30S subunit, it bridges several disparate RNA helices of the 16S rRNA. Forms part of the Shine-Dalgarno cleft in the 70S ribosome.</text>
</comment>
<comment type="subunit">
    <text evidence="1">Part of the 30S ribosomal subunit. Interacts with proteins S7 and S18. Binds to IF-3.</text>
</comment>
<comment type="similarity">
    <text evidence="1">Belongs to the universal ribosomal protein uS11 family.</text>
</comment>
<evidence type="ECO:0000255" key="1">
    <source>
        <dbReference type="HAMAP-Rule" id="MF_01310"/>
    </source>
</evidence>
<evidence type="ECO:0000305" key="2"/>
<reference key="1">
    <citation type="journal article" date="2001" name="Nature">
        <title>Complete genome sequence of Salmonella enterica serovar Typhimurium LT2.</title>
        <authorList>
            <person name="McClelland M."/>
            <person name="Sanderson K.E."/>
            <person name="Spieth J."/>
            <person name="Clifton S.W."/>
            <person name="Latreille P."/>
            <person name="Courtney L."/>
            <person name="Porwollik S."/>
            <person name="Ali J."/>
            <person name="Dante M."/>
            <person name="Du F."/>
            <person name="Hou S."/>
            <person name="Layman D."/>
            <person name="Leonard S."/>
            <person name="Nguyen C."/>
            <person name="Scott K."/>
            <person name="Holmes A."/>
            <person name="Grewal N."/>
            <person name="Mulvaney E."/>
            <person name="Ryan E."/>
            <person name="Sun H."/>
            <person name="Florea L."/>
            <person name="Miller W."/>
            <person name="Stoneking T."/>
            <person name="Nhan M."/>
            <person name="Waterston R."/>
            <person name="Wilson R.K."/>
        </authorList>
    </citation>
    <scope>NUCLEOTIDE SEQUENCE [LARGE SCALE GENOMIC DNA]</scope>
    <source>
        <strain>LT2 / SGSC1412 / ATCC 700720</strain>
    </source>
</reference>
<reference key="2">
    <citation type="journal article" date="1998" name="Proc. Natl. Acad. Sci. U.S.A.">
        <title>Virulence of antibiotic-resistant Salmonella typhimurium.</title>
        <authorList>
            <person name="Bjoerkman J."/>
            <person name="Hughes D."/>
            <person name="Andersson D.I."/>
        </authorList>
    </citation>
    <scope>NUCLEOTIDE SEQUENCE [GENOMIC DNA] OF 121-129</scope>
    <source>
        <strain>LT2</strain>
    </source>
</reference>
<dbReference type="EMBL" id="AE006468">
    <property type="protein sequence ID" value="AAL22280.1"/>
    <property type="molecule type" value="Genomic_DNA"/>
</dbReference>
<dbReference type="EMBL" id="AJ223236">
    <property type="protein sequence ID" value="CAA11202.1"/>
    <property type="molecule type" value="Genomic_DNA"/>
</dbReference>
<dbReference type="RefSeq" id="NP_462321.1">
    <property type="nucleotide sequence ID" value="NC_003197.2"/>
</dbReference>
<dbReference type="RefSeq" id="WP_001029758.1">
    <property type="nucleotide sequence ID" value="NC_003197.2"/>
</dbReference>
<dbReference type="SMR" id="O54296"/>
<dbReference type="STRING" id="99287.STM3417"/>
<dbReference type="PaxDb" id="99287-STM3417"/>
<dbReference type="GeneID" id="1254940"/>
<dbReference type="GeneID" id="98390419"/>
<dbReference type="KEGG" id="stm:STM3417"/>
<dbReference type="PATRIC" id="fig|99287.12.peg.3614"/>
<dbReference type="HOGENOM" id="CLU_072439_5_0_6"/>
<dbReference type="OMA" id="KWGVAHI"/>
<dbReference type="PhylomeDB" id="O54296"/>
<dbReference type="BioCyc" id="SENT99287:STM3417-MONOMER"/>
<dbReference type="Proteomes" id="UP000001014">
    <property type="component" value="Chromosome"/>
</dbReference>
<dbReference type="GO" id="GO:0022627">
    <property type="term" value="C:cytosolic small ribosomal subunit"/>
    <property type="evidence" value="ECO:0000318"/>
    <property type="project" value="GO_Central"/>
</dbReference>
<dbReference type="GO" id="GO:0019843">
    <property type="term" value="F:rRNA binding"/>
    <property type="evidence" value="ECO:0007669"/>
    <property type="project" value="UniProtKB-UniRule"/>
</dbReference>
<dbReference type="GO" id="GO:0003735">
    <property type="term" value="F:structural constituent of ribosome"/>
    <property type="evidence" value="ECO:0000318"/>
    <property type="project" value="GO_Central"/>
</dbReference>
<dbReference type="GO" id="GO:0006412">
    <property type="term" value="P:translation"/>
    <property type="evidence" value="ECO:0000318"/>
    <property type="project" value="GO_Central"/>
</dbReference>
<dbReference type="FunFam" id="3.30.420.80:FF:000001">
    <property type="entry name" value="30S ribosomal protein S11"/>
    <property type="match status" value="1"/>
</dbReference>
<dbReference type="Gene3D" id="3.30.420.80">
    <property type="entry name" value="Ribosomal protein S11"/>
    <property type="match status" value="1"/>
</dbReference>
<dbReference type="HAMAP" id="MF_01310">
    <property type="entry name" value="Ribosomal_uS11"/>
    <property type="match status" value="1"/>
</dbReference>
<dbReference type="InterPro" id="IPR001971">
    <property type="entry name" value="Ribosomal_uS11"/>
</dbReference>
<dbReference type="InterPro" id="IPR019981">
    <property type="entry name" value="Ribosomal_uS11_bac-type"/>
</dbReference>
<dbReference type="InterPro" id="IPR018102">
    <property type="entry name" value="Ribosomal_uS11_CS"/>
</dbReference>
<dbReference type="InterPro" id="IPR036967">
    <property type="entry name" value="Ribosomal_uS11_sf"/>
</dbReference>
<dbReference type="NCBIfam" id="NF003698">
    <property type="entry name" value="PRK05309.1"/>
    <property type="match status" value="1"/>
</dbReference>
<dbReference type="NCBIfam" id="TIGR03632">
    <property type="entry name" value="uS11_bact"/>
    <property type="match status" value="1"/>
</dbReference>
<dbReference type="PANTHER" id="PTHR11759">
    <property type="entry name" value="40S RIBOSOMAL PROTEIN S14/30S RIBOSOMAL PROTEIN S11"/>
    <property type="match status" value="1"/>
</dbReference>
<dbReference type="Pfam" id="PF00411">
    <property type="entry name" value="Ribosomal_S11"/>
    <property type="match status" value="1"/>
</dbReference>
<dbReference type="PIRSF" id="PIRSF002131">
    <property type="entry name" value="Ribosomal_S11"/>
    <property type="match status" value="1"/>
</dbReference>
<dbReference type="SUPFAM" id="SSF53137">
    <property type="entry name" value="Translational machinery components"/>
    <property type="match status" value="1"/>
</dbReference>
<dbReference type="PROSITE" id="PS00054">
    <property type="entry name" value="RIBOSOMAL_S11"/>
    <property type="match status" value="1"/>
</dbReference>
<name>RS11_SALTY</name>
<sequence length="129" mass="13831">MAKAPVRARKRVRKQVSDGVAHIHASFNNTIVTITDRQGNALGWATAGGSGFRGSRKSTPFAAQVAAERCADAVKEYGIKNLEVMVKGPGPGRESTIRALNAAGFRITNITDVTPIPHNGCRPPKKRRV</sequence>
<accession>O54296</accession>
<feature type="chain" id="PRO_0000123213" description="Small ribosomal subunit protein uS11">
    <location>
        <begin position="1"/>
        <end position="129"/>
    </location>
</feature>